<organism>
    <name type="scientific">Pasteurella multocida (strain Pm70)</name>
    <dbReference type="NCBI Taxonomy" id="272843"/>
    <lineage>
        <taxon>Bacteria</taxon>
        <taxon>Pseudomonadati</taxon>
        <taxon>Pseudomonadota</taxon>
        <taxon>Gammaproteobacteria</taxon>
        <taxon>Pasteurellales</taxon>
        <taxon>Pasteurellaceae</taxon>
        <taxon>Pasteurella</taxon>
    </lineage>
</organism>
<protein>
    <recommendedName>
        <fullName>Putative esterase PM0788</fullName>
        <ecNumber>3.1.2.-</ecNumber>
    </recommendedName>
</protein>
<gene>
    <name type="ordered locus">PM0788</name>
</gene>
<reference key="1">
    <citation type="journal article" date="2001" name="Proc. Natl. Acad. Sci. U.S.A.">
        <title>Complete genomic sequence of Pasteurella multocida Pm70.</title>
        <authorList>
            <person name="May B.J."/>
            <person name="Zhang Q."/>
            <person name="Li L.L."/>
            <person name="Paustian M.L."/>
            <person name="Whittam T.S."/>
            <person name="Kapur V."/>
        </authorList>
    </citation>
    <scope>NUCLEOTIDE SEQUENCE [LARGE SCALE GENOMIC DNA]</scope>
    <source>
        <strain>Pm70</strain>
    </source>
</reference>
<keyword id="KW-0378">Hydrolase</keyword>
<keyword id="KW-1185">Reference proteome</keyword>
<feature type="chain" id="PRO_0000156684" description="Putative esterase PM0788">
    <location>
        <begin position="1"/>
        <end position="139"/>
    </location>
</feature>
<evidence type="ECO:0000305" key="1"/>
<comment type="similarity">
    <text evidence="1">Belongs to the thioesterase PaaI family.</text>
</comment>
<name>Y788_PASMU</name>
<dbReference type="EC" id="3.1.2.-"/>
<dbReference type="EMBL" id="AE004439">
    <property type="protein sequence ID" value="AAK02872.1"/>
    <property type="molecule type" value="Genomic_DNA"/>
</dbReference>
<dbReference type="RefSeq" id="WP_010906854.1">
    <property type="nucleotide sequence ID" value="NC_002663.1"/>
</dbReference>
<dbReference type="SMR" id="Q9CMM9"/>
<dbReference type="STRING" id="272843.PM0788"/>
<dbReference type="EnsemblBacteria" id="AAK02872">
    <property type="protein sequence ID" value="AAK02872"/>
    <property type="gene ID" value="PM0788"/>
</dbReference>
<dbReference type="KEGG" id="pmu:PM0788"/>
<dbReference type="PATRIC" id="fig|272843.6.peg.797"/>
<dbReference type="HOGENOM" id="CLU_089876_13_1_6"/>
<dbReference type="OrthoDB" id="9798208at2"/>
<dbReference type="Proteomes" id="UP000000809">
    <property type="component" value="Chromosome"/>
</dbReference>
<dbReference type="GO" id="GO:0005829">
    <property type="term" value="C:cytosol"/>
    <property type="evidence" value="ECO:0007669"/>
    <property type="project" value="TreeGrafter"/>
</dbReference>
<dbReference type="GO" id="GO:0061522">
    <property type="term" value="F:1,4-dihydroxy-2-naphthoyl-CoA thioesterase activity"/>
    <property type="evidence" value="ECO:0007669"/>
    <property type="project" value="TreeGrafter"/>
</dbReference>
<dbReference type="CDD" id="cd03443">
    <property type="entry name" value="PaaI_thioesterase"/>
    <property type="match status" value="1"/>
</dbReference>
<dbReference type="Gene3D" id="3.10.129.10">
    <property type="entry name" value="Hotdog Thioesterase"/>
    <property type="match status" value="1"/>
</dbReference>
<dbReference type="InterPro" id="IPR029069">
    <property type="entry name" value="HotDog_dom_sf"/>
</dbReference>
<dbReference type="InterPro" id="IPR003736">
    <property type="entry name" value="PAAI_dom"/>
</dbReference>
<dbReference type="InterPro" id="IPR006683">
    <property type="entry name" value="Thioestr_dom"/>
</dbReference>
<dbReference type="NCBIfam" id="TIGR00369">
    <property type="entry name" value="unchar_dom_1"/>
    <property type="match status" value="1"/>
</dbReference>
<dbReference type="PANTHER" id="PTHR43240">
    <property type="entry name" value="1,4-DIHYDROXY-2-NAPHTHOYL-COA THIOESTERASE 1"/>
    <property type="match status" value="1"/>
</dbReference>
<dbReference type="PANTHER" id="PTHR43240:SF5">
    <property type="entry name" value="1,4-DIHYDROXY-2-NAPHTHOYL-COA THIOESTERASE 1"/>
    <property type="match status" value="1"/>
</dbReference>
<dbReference type="Pfam" id="PF03061">
    <property type="entry name" value="4HBT"/>
    <property type="match status" value="1"/>
</dbReference>
<dbReference type="SUPFAM" id="SSF54637">
    <property type="entry name" value="Thioesterase/thiol ester dehydrase-isomerase"/>
    <property type="match status" value="1"/>
</dbReference>
<proteinExistence type="inferred from homology"/>
<accession>Q9CMM9</accession>
<sequence length="139" mass="15488">MIWKKKYTLEQMNLLSQNTAISHLAIQFSAQGENWLEATMPVDQRTIQPMGFLHGGLSVALAETIGSMAGFCCITENQFVLGLEINANHLRPVKQGIVTARATPIHLGTRTQVWQIEIKDQQDQLCCLSRLTLSVGNHE</sequence>